<reference key="1">
    <citation type="submission" date="2007-07" db="EMBL/GenBank/DDBJ databases">
        <title>Genome sequence of Campylobacter curvus 525.92 isolated from human feces.</title>
        <authorList>
            <person name="Fouts D.E."/>
            <person name="Mongodin E.F."/>
            <person name="Puiu D."/>
            <person name="Sebastian Y."/>
            <person name="Miller W.G."/>
            <person name="Mandrell R.E."/>
            <person name="Lastovica A.J."/>
            <person name="Nelson K.E."/>
        </authorList>
    </citation>
    <scope>NUCLEOTIDE SEQUENCE [LARGE SCALE GENOMIC DNA]</scope>
    <source>
        <strain>525.92</strain>
    </source>
</reference>
<dbReference type="EC" id="4.3.2.10" evidence="1"/>
<dbReference type="EMBL" id="CP000767">
    <property type="protein sequence ID" value="EAT99790.1"/>
    <property type="molecule type" value="Genomic_DNA"/>
</dbReference>
<dbReference type="RefSeq" id="WP_009649493.1">
    <property type="nucleotide sequence ID" value="NC_009715.2"/>
</dbReference>
<dbReference type="SMR" id="A7GVW5"/>
<dbReference type="STRING" id="360105.CCV52592_1117"/>
<dbReference type="KEGG" id="ccv:CCV52592_1117"/>
<dbReference type="HOGENOM" id="CLU_048577_4_0_7"/>
<dbReference type="OrthoDB" id="9807749at2"/>
<dbReference type="UniPathway" id="UPA00031">
    <property type="reaction ID" value="UER00010"/>
</dbReference>
<dbReference type="Proteomes" id="UP000006380">
    <property type="component" value="Chromosome"/>
</dbReference>
<dbReference type="GO" id="GO:0005737">
    <property type="term" value="C:cytoplasm"/>
    <property type="evidence" value="ECO:0007669"/>
    <property type="project" value="UniProtKB-SubCell"/>
</dbReference>
<dbReference type="GO" id="GO:0000107">
    <property type="term" value="F:imidazoleglycerol-phosphate synthase activity"/>
    <property type="evidence" value="ECO:0007669"/>
    <property type="project" value="UniProtKB-UniRule"/>
</dbReference>
<dbReference type="GO" id="GO:0016829">
    <property type="term" value="F:lyase activity"/>
    <property type="evidence" value="ECO:0007669"/>
    <property type="project" value="UniProtKB-KW"/>
</dbReference>
<dbReference type="GO" id="GO:0000105">
    <property type="term" value="P:L-histidine biosynthetic process"/>
    <property type="evidence" value="ECO:0007669"/>
    <property type="project" value="UniProtKB-UniRule"/>
</dbReference>
<dbReference type="CDD" id="cd04731">
    <property type="entry name" value="HisF"/>
    <property type="match status" value="1"/>
</dbReference>
<dbReference type="FunFam" id="3.20.20.70:FF:000006">
    <property type="entry name" value="Imidazole glycerol phosphate synthase subunit HisF"/>
    <property type="match status" value="1"/>
</dbReference>
<dbReference type="Gene3D" id="3.20.20.70">
    <property type="entry name" value="Aldolase class I"/>
    <property type="match status" value="1"/>
</dbReference>
<dbReference type="HAMAP" id="MF_01013">
    <property type="entry name" value="HisF"/>
    <property type="match status" value="1"/>
</dbReference>
<dbReference type="InterPro" id="IPR013785">
    <property type="entry name" value="Aldolase_TIM"/>
</dbReference>
<dbReference type="InterPro" id="IPR006062">
    <property type="entry name" value="His_biosynth"/>
</dbReference>
<dbReference type="InterPro" id="IPR004651">
    <property type="entry name" value="HisF"/>
</dbReference>
<dbReference type="InterPro" id="IPR050064">
    <property type="entry name" value="IGPS_HisA/HisF"/>
</dbReference>
<dbReference type="InterPro" id="IPR011060">
    <property type="entry name" value="RibuloseP-bd_barrel"/>
</dbReference>
<dbReference type="NCBIfam" id="TIGR00735">
    <property type="entry name" value="hisF"/>
    <property type="match status" value="1"/>
</dbReference>
<dbReference type="PANTHER" id="PTHR21235:SF2">
    <property type="entry name" value="IMIDAZOLE GLYCEROL PHOSPHATE SYNTHASE HISHF"/>
    <property type="match status" value="1"/>
</dbReference>
<dbReference type="PANTHER" id="PTHR21235">
    <property type="entry name" value="IMIDAZOLE GLYCEROL PHOSPHATE SYNTHASE SUBUNIT HISF/H IGP SYNTHASE SUBUNIT HISF/H"/>
    <property type="match status" value="1"/>
</dbReference>
<dbReference type="Pfam" id="PF00977">
    <property type="entry name" value="His_biosynth"/>
    <property type="match status" value="1"/>
</dbReference>
<dbReference type="SUPFAM" id="SSF51366">
    <property type="entry name" value="Ribulose-phoshate binding barrel"/>
    <property type="match status" value="1"/>
</dbReference>
<organism>
    <name type="scientific">Campylobacter curvus (strain 525.92)</name>
    <dbReference type="NCBI Taxonomy" id="360105"/>
    <lineage>
        <taxon>Bacteria</taxon>
        <taxon>Pseudomonadati</taxon>
        <taxon>Campylobacterota</taxon>
        <taxon>Epsilonproteobacteria</taxon>
        <taxon>Campylobacterales</taxon>
        <taxon>Campylobacteraceae</taxon>
        <taxon>Campylobacter</taxon>
    </lineage>
</organism>
<name>HIS6_CAMC5</name>
<evidence type="ECO:0000255" key="1">
    <source>
        <dbReference type="HAMAP-Rule" id="MF_01013"/>
    </source>
</evidence>
<accession>A7GVW5</accession>
<sequence>MNHFAKRIIPCLDVKDGRVVKGVNFVGLIDAGDPVEVAKRYNEEGADELAFLDITATHLGQETMVETIARVAKELFIPLTVGGGIRTLDDISRLLNVGCDKVSLNSAAIHNPNLIDEAANKFGSQCVVVAIDAKKFDATHHVFINGGRIDTGKDALAWAKEVQERGAGEILLTSMDKDGTKDGYDITLTNAISKALNIPVIASGGAGTMEHIKDAFLNGADACLAASIFHFRQIEIRALKRYLKENGIEVRL</sequence>
<comment type="function">
    <text evidence="1">IGPS catalyzes the conversion of PRFAR and glutamine to IGP, AICAR and glutamate. The HisF subunit catalyzes the cyclization activity that produces IGP and AICAR from PRFAR using the ammonia provided by the HisH subunit.</text>
</comment>
<comment type="catalytic activity">
    <reaction evidence="1">
        <text>5-[(5-phospho-1-deoxy-D-ribulos-1-ylimino)methylamino]-1-(5-phospho-beta-D-ribosyl)imidazole-4-carboxamide + L-glutamine = D-erythro-1-(imidazol-4-yl)glycerol 3-phosphate + 5-amino-1-(5-phospho-beta-D-ribosyl)imidazole-4-carboxamide + L-glutamate + H(+)</text>
        <dbReference type="Rhea" id="RHEA:24793"/>
        <dbReference type="ChEBI" id="CHEBI:15378"/>
        <dbReference type="ChEBI" id="CHEBI:29985"/>
        <dbReference type="ChEBI" id="CHEBI:58278"/>
        <dbReference type="ChEBI" id="CHEBI:58359"/>
        <dbReference type="ChEBI" id="CHEBI:58475"/>
        <dbReference type="ChEBI" id="CHEBI:58525"/>
        <dbReference type="EC" id="4.3.2.10"/>
    </reaction>
</comment>
<comment type="pathway">
    <text evidence="1">Amino-acid biosynthesis; L-histidine biosynthesis; L-histidine from 5-phospho-alpha-D-ribose 1-diphosphate: step 5/9.</text>
</comment>
<comment type="subunit">
    <text evidence="1">Heterodimer of HisH and HisF.</text>
</comment>
<comment type="subcellular location">
    <subcellularLocation>
        <location evidence="1">Cytoplasm</location>
    </subcellularLocation>
</comment>
<comment type="similarity">
    <text evidence="1">Belongs to the HisA/HisF family.</text>
</comment>
<proteinExistence type="inferred from homology"/>
<feature type="chain" id="PRO_1000063039" description="Imidazole glycerol phosphate synthase subunit HisF">
    <location>
        <begin position="1"/>
        <end position="252"/>
    </location>
</feature>
<feature type="active site" evidence="1">
    <location>
        <position position="13"/>
    </location>
</feature>
<feature type="active site" evidence="1">
    <location>
        <position position="132"/>
    </location>
</feature>
<protein>
    <recommendedName>
        <fullName evidence="1">Imidazole glycerol phosphate synthase subunit HisF</fullName>
        <ecNumber evidence="1">4.3.2.10</ecNumber>
    </recommendedName>
    <alternativeName>
        <fullName evidence="1">IGP synthase cyclase subunit</fullName>
    </alternativeName>
    <alternativeName>
        <fullName evidence="1">IGP synthase subunit HisF</fullName>
    </alternativeName>
    <alternativeName>
        <fullName evidence="1">ImGP synthase subunit HisF</fullName>
        <shortName evidence="1">IGPS subunit HisF</shortName>
    </alternativeName>
</protein>
<keyword id="KW-0028">Amino-acid biosynthesis</keyword>
<keyword id="KW-0963">Cytoplasm</keyword>
<keyword id="KW-0368">Histidine biosynthesis</keyword>
<keyword id="KW-0456">Lyase</keyword>
<keyword id="KW-1185">Reference proteome</keyword>
<gene>
    <name evidence="1" type="primary">hisF</name>
    <name type="ordered locus">Ccur92_00530</name>
    <name type="ORF">CCV52592_1117</name>
</gene>